<name>IHFB_YERP3</name>
<dbReference type="EMBL" id="CP000720">
    <property type="protein sequence ID" value="ABS46677.1"/>
    <property type="molecule type" value="Genomic_DNA"/>
</dbReference>
<dbReference type="RefSeq" id="WP_002211322.1">
    <property type="nucleotide sequence ID" value="NC_009708.1"/>
</dbReference>
<dbReference type="SMR" id="A7FJW6"/>
<dbReference type="GeneID" id="96664989"/>
<dbReference type="KEGG" id="ypi:YpsIP31758_2579"/>
<dbReference type="HOGENOM" id="CLU_105066_2_0_6"/>
<dbReference type="Proteomes" id="UP000002412">
    <property type="component" value="Chromosome"/>
</dbReference>
<dbReference type="GO" id="GO:0005694">
    <property type="term" value="C:chromosome"/>
    <property type="evidence" value="ECO:0007669"/>
    <property type="project" value="InterPro"/>
</dbReference>
<dbReference type="GO" id="GO:0005829">
    <property type="term" value="C:cytosol"/>
    <property type="evidence" value="ECO:0007669"/>
    <property type="project" value="TreeGrafter"/>
</dbReference>
<dbReference type="GO" id="GO:0003677">
    <property type="term" value="F:DNA binding"/>
    <property type="evidence" value="ECO:0007669"/>
    <property type="project" value="UniProtKB-UniRule"/>
</dbReference>
<dbReference type="GO" id="GO:0030527">
    <property type="term" value="F:structural constituent of chromatin"/>
    <property type="evidence" value="ECO:0007669"/>
    <property type="project" value="InterPro"/>
</dbReference>
<dbReference type="GO" id="GO:0006310">
    <property type="term" value="P:DNA recombination"/>
    <property type="evidence" value="ECO:0007669"/>
    <property type="project" value="UniProtKB-UniRule"/>
</dbReference>
<dbReference type="GO" id="GO:0006355">
    <property type="term" value="P:regulation of DNA-templated transcription"/>
    <property type="evidence" value="ECO:0007669"/>
    <property type="project" value="UniProtKB-UniRule"/>
</dbReference>
<dbReference type="GO" id="GO:0006417">
    <property type="term" value="P:regulation of translation"/>
    <property type="evidence" value="ECO:0007669"/>
    <property type="project" value="UniProtKB-UniRule"/>
</dbReference>
<dbReference type="CDD" id="cd13836">
    <property type="entry name" value="IHF_B"/>
    <property type="match status" value="1"/>
</dbReference>
<dbReference type="FunFam" id="4.10.520.10:FF:000003">
    <property type="entry name" value="Integration host factor subunit beta"/>
    <property type="match status" value="1"/>
</dbReference>
<dbReference type="Gene3D" id="4.10.520.10">
    <property type="entry name" value="IHF-like DNA-binding proteins"/>
    <property type="match status" value="1"/>
</dbReference>
<dbReference type="HAMAP" id="MF_00381">
    <property type="entry name" value="IHF_beta"/>
    <property type="match status" value="1"/>
</dbReference>
<dbReference type="InterPro" id="IPR000119">
    <property type="entry name" value="Hist_DNA-bd"/>
</dbReference>
<dbReference type="InterPro" id="IPR020816">
    <property type="entry name" value="Histone-like_DNA-bd_CS"/>
</dbReference>
<dbReference type="InterPro" id="IPR010992">
    <property type="entry name" value="IHF-like_DNA-bd_dom_sf"/>
</dbReference>
<dbReference type="InterPro" id="IPR005685">
    <property type="entry name" value="IHF_beta"/>
</dbReference>
<dbReference type="NCBIfam" id="TIGR00988">
    <property type="entry name" value="hip"/>
    <property type="match status" value="1"/>
</dbReference>
<dbReference type="NCBIfam" id="NF001222">
    <property type="entry name" value="PRK00199.1"/>
    <property type="match status" value="1"/>
</dbReference>
<dbReference type="PANTHER" id="PTHR33175">
    <property type="entry name" value="DNA-BINDING PROTEIN HU"/>
    <property type="match status" value="1"/>
</dbReference>
<dbReference type="PANTHER" id="PTHR33175:SF5">
    <property type="entry name" value="INTEGRATION HOST FACTOR SUBUNIT BETA"/>
    <property type="match status" value="1"/>
</dbReference>
<dbReference type="Pfam" id="PF00216">
    <property type="entry name" value="Bac_DNA_binding"/>
    <property type="match status" value="1"/>
</dbReference>
<dbReference type="PRINTS" id="PR01727">
    <property type="entry name" value="DNABINDINGHU"/>
</dbReference>
<dbReference type="SMART" id="SM00411">
    <property type="entry name" value="BHL"/>
    <property type="match status" value="1"/>
</dbReference>
<dbReference type="SUPFAM" id="SSF47729">
    <property type="entry name" value="IHF-like DNA-binding proteins"/>
    <property type="match status" value="1"/>
</dbReference>
<dbReference type="PROSITE" id="PS00045">
    <property type="entry name" value="HISTONE_LIKE"/>
    <property type="match status" value="1"/>
</dbReference>
<protein>
    <recommendedName>
        <fullName evidence="1">Integration host factor subunit beta</fullName>
        <shortName evidence="1">IHF-beta</shortName>
    </recommendedName>
</protein>
<feature type="chain" id="PRO_1000060678" description="Integration host factor subunit beta">
    <location>
        <begin position="1"/>
        <end position="94"/>
    </location>
</feature>
<keyword id="KW-0233">DNA recombination</keyword>
<keyword id="KW-0238">DNA-binding</keyword>
<keyword id="KW-0804">Transcription</keyword>
<keyword id="KW-0805">Transcription regulation</keyword>
<keyword id="KW-0810">Translation regulation</keyword>
<reference key="1">
    <citation type="journal article" date="2007" name="PLoS Genet.">
        <title>The complete genome sequence of Yersinia pseudotuberculosis IP31758, the causative agent of Far East scarlet-like fever.</title>
        <authorList>
            <person name="Eppinger M."/>
            <person name="Rosovitz M.J."/>
            <person name="Fricke W.F."/>
            <person name="Rasko D.A."/>
            <person name="Kokorina G."/>
            <person name="Fayolle C."/>
            <person name="Lindler L.E."/>
            <person name="Carniel E."/>
            <person name="Ravel J."/>
        </authorList>
    </citation>
    <scope>NUCLEOTIDE SEQUENCE [LARGE SCALE GENOMIC DNA]</scope>
    <source>
        <strain>IP 31758</strain>
    </source>
</reference>
<evidence type="ECO:0000255" key="1">
    <source>
        <dbReference type="HAMAP-Rule" id="MF_00381"/>
    </source>
</evidence>
<comment type="function">
    <text evidence="1">This protein is one of the two subunits of integration host factor, a specific DNA-binding protein that functions in genetic recombination as well as in transcriptional and translational control.</text>
</comment>
<comment type="subunit">
    <text evidence="1">Heterodimer of an alpha and a beta chain.</text>
</comment>
<comment type="similarity">
    <text evidence="1">Belongs to the bacterial histone-like protein family.</text>
</comment>
<accession>A7FJW6</accession>
<gene>
    <name evidence="1" type="primary">ihfB</name>
    <name evidence="1" type="synonym">himD</name>
    <name type="ordered locus">YpsIP31758_2579</name>
</gene>
<organism>
    <name type="scientific">Yersinia pseudotuberculosis serotype O:1b (strain IP 31758)</name>
    <dbReference type="NCBI Taxonomy" id="349747"/>
    <lineage>
        <taxon>Bacteria</taxon>
        <taxon>Pseudomonadati</taxon>
        <taxon>Pseudomonadota</taxon>
        <taxon>Gammaproteobacteria</taxon>
        <taxon>Enterobacterales</taxon>
        <taxon>Yersiniaceae</taxon>
        <taxon>Yersinia</taxon>
    </lineage>
</organism>
<proteinExistence type="inferred from homology"/>
<sequence>MTKSELIERLAGQQSHVPAKVVEDAVKEMLEHMAGTLAEGERIEIRGFGSFSLHYRAPRVGRNPKTGDKVELEGKYVPHFKPGKELRDRANIYG</sequence>